<proteinExistence type="inferred from homology"/>
<evidence type="ECO:0000250" key="1"/>
<evidence type="ECO:0000255" key="2">
    <source>
        <dbReference type="HAMAP-Rule" id="MF_01382"/>
    </source>
</evidence>
<evidence type="ECO:0000305" key="3"/>
<dbReference type="EC" id="7.4.2.8" evidence="2"/>
<dbReference type="EMBL" id="BA000021">
    <property type="protein sequence ID" value="BAC24346.1"/>
    <property type="molecule type" value="Genomic_DNA"/>
</dbReference>
<dbReference type="SMR" id="Q8D301"/>
<dbReference type="STRING" id="36870.gene:10368688"/>
<dbReference type="KEGG" id="wbr:secA"/>
<dbReference type="eggNOG" id="COG0653">
    <property type="taxonomic scope" value="Bacteria"/>
</dbReference>
<dbReference type="HOGENOM" id="CLU_005314_3_0_6"/>
<dbReference type="OrthoDB" id="9805579at2"/>
<dbReference type="Proteomes" id="UP000000562">
    <property type="component" value="Chromosome"/>
</dbReference>
<dbReference type="GO" id="GO:0031522">
    <property type="term" value="C:cell envelope Sec protein transport complex"/>
    <property type="evidence" value="ECO:0007669"/>
    <property type="project" value="TreeGrafter"/>
</dbReference>
<dbReference type="GO" id="GO:0005829">
    <property type="term" value="C:cytosol"/>
    <property type="evidence" value="ECO:0007669"/>
    <property type="project" value="TreeGrafter"/>
</dbReference>
<dbReference type="GO" id="GO:0005886">
    <property type="term" value="C:plasma membrane"/>
    <property type="evidence" value="ECO:0007669"/>
    <property type="project" value="UniProtKB-SubCell"/>
</dbReference>
<dbReference type="GO" id="GO:0005524">
    <property type="term" value="F:ATP binding"/>
    <property type="evidence" value="ECO:0007669"/>
    <property type="project" value="UniProtKB-UniRule"/>
</dbReference>
<dbReference type="GO" id="GO:0008564">
    <property type="term" value="F:protein-exporting ATPase activity"/>
    <property type="evidence" value="ECO:0007669"/>
    <property type="project" value="UniProtKB-EC"/>
</dbReference>
<dbReference type="GO" id="GO:0065002">
    <property type="term" value="P:intracellular protein transmembrane transport"/>
    <property type="evidence" value="ECO:0007669"/>
    <property type="project" value="UniProtKB-UniRule"/>
</dbReference>
<dbReference type="GO" id="GO:0017038">
    <property type="term" value="P:protein import"/>
    <property type="evidence" value="ECO:0007669"/>
    <property type="project" value="InterPro"/>
</dbReference>
<dbReference type="GO" id="GO:0006605">
    <property type="term" value="P:protein targeting"/>
    <property type="evidence" value="ECO:0007669"/>
    <property type="project" value="UniProtKB-UniRule"/>
</dbReference>
<dbReference type="GO" id="GO:0043952">
    <property type="term" value="P:protein transport by the Sec complex"/>
    <property type="evidence" value="ECO:0007669"/>
    <property type="project" value="TreeGrafter"/>
</dbReference>
<dbReference type="CDD" id="cd17928">
    <property type="entry name" value="DEXDc_SecA"/>
    <property type="match status" value="1"/>
</dbReference>
<dbReference type="CDD" id="cd18803">
    <property type="entry name" value="SF2_C_secA"/>
    <property type="match status" value="1"/>
</dbReference>
<dbReference type="FunFam" id="3.40.50.300:FF:000113">
    <property type="entry name" value="Preprotein translocase subunit SecA"/>
    <property type="match status" value="1"/>
</dbReference>
<dbReference type="FunFam" id="3.90.1440.10:FF:000001">
    <property type="entry name" value="Preprotein translocase subunit SecA"/>
    <property type="match status" value="1"/>
</dbReference>
<dbReference type="Gene3D" id="1.10.3060.10">
    <property type="entry name" value="Helical scaffold and wing domains of SecA"/>
    <property type="match status" value="1"/>
</dbReference>
<dbReference type="Gene3D" id="3.40.50.300">
    <property type="entry name" value="P-loop containing nucleotide triphosphate hydrolases"/>
    <property type="match status" value="2"/>
</dbReference>
<dbReference type="Gene3D" id="3.90.1440.10">
    <property type="entry name" value="SecA, preprotein cross-linking domain"/>
    <property type="match status" value="1"/>
</dbReference>
<dbReference type="HAMAP" id="MF_01382">
    <property type="entry name" value="SecA"/>
    <property type="match status" value="1"/>
</dbReference>
<dbReference type="InterPro" id="IPR014001">
    <property type="entry name" value="Helicase_ATP-bd"/>
</dbReference>
<dbReference type="InterPro" id="IPR027417">
    <property type="entry name" value="P-loop_NTPase"/>
</dbReference>
<dbReference type="InterPro" id="IPR000185">
    <property type="entry name" value="SecA"/>
</dbReference>
<dbReference type="InterPro" id="IPR020937">
    <property type="entry name" value="SecA_CS"/>
</dbReference>
<dbReference type="InterPro" id="IPR011115">
    <property type="entry name" value="SecA_DEAD"/>
</dbReference>
<dbReference type="InterPro" id="IPR014018">
    <property type="entry name" value="SecA_motor_DEAD"/>
</dbReference>
<dbReference type="InterPro" id="IPR011130">
    <property type="entry name" value="SecA_preprotein_X-link_dom"/>
</dbReference>
<dbReference type="InterPro" id="IPR044722">
    <property type="entry name" value="SecA_SF2_C"/>
</dbReference>
<dbReference type="InterPro" id="IPR011116">
    <property type="entry name" value="SecA_Wing/Scaffold"/>
</dbReference>
<dbReference type="InterPro" id="IPR036266">
    <property type="entry name" value="SecA_Wing/Scaffold_sf"/>
</dbReference>
<dbReference type="InterPro" id="IPR036670">
    <property type="entry name" value="SecA_X-link_sf"/>
</dbReference>
<dbReference type="NCBIfam" id="NF009538">
    <property type="entry name" value="PRK12904.1"/>
    <property type="match status" value="1"/>
</dbReference>
<dbReference type="NCBIfam" id="TIGR00963">
    <property type="entry name" value="secA"/>
    <property type="match status" value="1"/>
</dbReference>
<dbReference type="PANTHER" id="PTHR30612:SF0">
    <property type="entry name" value="CHLOROPLAST PROTEIN-TRANSPORTING ATPASE"/>
    <property type="match status" value="1"/>
</dbReference>
<dbReference type="PANTHER" id="PTHR30612">
    <property type="entry name" value="SECA INNER MEMBRANE COMPONENT OF SEC PROTEIN SECRETION SYSTEM"/>
    <property type="match status" value="1"/>
</dbReference>
<dbReference type="Pfam" id="PF21090">
    <property type="entry name" value="P-loop_SecA"/>
    <property type="match status" value="1"/>
</dbReference>
<dbReference type="Pfam" id="PF07517">
    <property type="entry name" value="SecA_DEAD"/>
    <property type="match status" value="1"/>
</dbReference>
<dbReference type="Pfam" id="PF01043">
    <property type="entry name" value="SecA_PP_bind"/>
    <property type="match status" value="1"/>
</dbReference>
<dbReference type="Pfam" id="PF07516">
    <property type="entry name" value="SecA_SW"/>
    <property type="match status" value="1"/>
</dbReference>
<dbReference type="PRINTS" id="PR00906">
    <property type="entry name" value="SECA"/>
</dbReference>
<dbReference type="SMART" id="SM00957">
    <property type="entry name" value="SecA_DEAD"/>
    <property type="match status" value="1"/>
</dbReference>
<dbReference type="SMART" id="SM00958">
    <property type="entry name" value="SecA_PP_bind"/>
    <property type="match status" value="1"/>
</dbReference>
<dbReference type="SUPFAM" id="SSF81886">
    <property type="entry name" value="Helical scaffold and wing domains of SecA"/>
    <property type="match status" value="1"/>
</dbReference>
<dbReference type="SUPFAM" id="SSF52540">
    <property type="entry name" value="P-loop containing nucleoside triphosphate hydrolases"/>
    <property type="match status" value="2"/>
</dbReference>
<dbReference type="SUPFAM" id="SSF81767">
    <property type="entry name" value="Pre-protein crosslinking domain of SecA"/>
    <property type="match status" value="1"/>
</dbReference>
<dbReference type="PROSITE" id="PS01312">
    <property type="entry name" value="SECA"/>
    <property type="match status" value="1"/>
</dbReference>
<dbReference type="PROSITE" id="PS51196">
    <property type="entry name" value="SECA_MOTOR_DEAD"/>
    <property type="match status" value="1"/>
</dbReference>
<keyword id="KW-0067">ATP-binding</keyword>
<keyword id="KW-1003">Cell membrane</keyword>
<keyword id="KW-0963">Cytoplasm</keyword>
<keyword id="KW-0472">Membrane</keyword>
<keyword id="KW-0547">Nucleotide-binding</keyword>
<keyword id="KW-0653">Protein transport</keyword>
<keyword id="KW-1185">Reference proteome</keyword>
<keyword id="KW-1278">Translocase</keyword>
<keyword id="KW-0811">Translocation</keyword>
<keyword id="KW-0813">Transport</keyword>
<feature type="chain" id="PRO_0000321038" description="Protein translocase subunit SecA">
    <location>
        <begin position="1"/>
        <end position="832"/>
    </location>
</feature>
<feature type="binding site" evidence="2">
    <location>
        <position position="87"/>
    </location>
    <ligand>
        <name>ATP</name>
        <dbReference type="ChEBI" id="CHEBI:30616"/>
    </ligand>
</feature>
<feature type="binding site" evidence="2">
    <location>
        <begin position="105"/>
        <end position="109"/>
    </location>
    <ligand>
        <name>ATP</name>
        <dbReference type="ChEBI" id="CHEBI:30616"/>
    </ligand>
</feature>
<feature type="binding site" evidence="2">
    <location>
        <position position="512"/>
    </location>
    <ligand>
        <name>ATP</name>
        <dbReference type="ChEBI" id="CHEBI:30616"/>
    </ligand>
</feature>
<gene>
    <name evidence="2" type="primary">secA</name>
    <name type="ordered locus">WIGBR2000</name>
</gene>
<protein>
    <recommendedName>
        <fullName evidence="2">Protein translocase subunit SecA</fullName>
        <ecNumber evidence="2">7.4.2.8</ecNumber>
    </recommendedName>
</protein>
<sequence>MLIKLFGKIFKNSNDRALKVINLIVKKINSLESTIEKLTDQQLSSKTIEFKNRISDGDNLNNILPEAYAVVREASKRIFNMRHFDVQLMGGIVLNRRCIAEMSTGEGKTLTSVLPAYLHSLLGKGVHIVTVNDYLAKRDANNNKPLFEFLGITVGINLPGLNNIEKRNAYLADITYGTNNEYGFDYLRDNMIFNENEKVQRNLYFALVDEVDSILIDESRTPLIISGPIKSNSDIYYKINKLVPNLIKQEKEDSENFQGNGHFTIDEKSKQINMTERGLILVENLLIKNHLMNKNDSLYSSKNISLMHHFISALRAHKLFFKNVDYIVKNNEIIIVDEHTGRTMHGRRWSDGLHQAIEAKEKVNINNENQTLASITFQNYFRLYEKLSGMTGTAYTEAAEFKAIYKLDTIIIPTNRPVIRNDLPDLIYMTEKEKINAIINDIKNCYSKNIPVLVGTISIEKSENISNILKKLRIKHNVLNAKFHELEAEIISQAGCPKSITIATNMAGRGTDIILGGNWKSEFFNKKNINKKRIKKIKESWVKKNNYVIKLGGLHIIGTERHESRRIDNQLRGRSGRQGDPGSSRFYVSMEDNLMRIFASNRIIQTMQKLGMKTGESIEHKWITKAISNAQKKVENRNFDMRKQLLDYDDVANEQRKAIYSQRTEILNSLDIKDIIDNIRKDVLKKIFEKYKTKHSEKINVNLIKIENLIKKYFCIEISILSLYKENKCNLEKLYKNILIIILKKYNEKENKIGSTNLRIFEKNIMIKTLDSFWREHLSSIDYLRQGIHLRGYAQKDPKQEYKRESFIMFENMLYELKIEVITIISNVKIKS</sequence>
<reference key="1">
    <citation type="journal article" date="2002" name="Nat. Genet.">
        <title>Genome sequence of the endocellular obligate symbiont of tsetse flies, Wigglesworthia glossinidia.</title>
        <authorList>
            <person name="Akman L."/>
            <person name="Yamashita A."/>
            <person name="Watanabe H."/>
            <person name="Oshima K."/>
            <person name="Shiba T."/>
            <person name="Hattori M."/>
            <person name="Aksoy S."/>
        </authorList>
    </citation>
    <scope>NUCLEOTIDE SEQUENCE [LARGE SCALE GENOMIC DNA]</scope>
</reference>
<organism>
    <name type="scientific">Wigglesworthia glossinidia brevipalpis</name>
    <dbReference type="NCBI Taxonomy" id="36870"/>
    <lineage>
        <taxon>Bacteria</taxon>
        <taxon>Pseudomonadati</taxon>
        <taxon>Pseudomonadota</taxon>
        <taxon>Gammaproteobacteria</taxon>
        <taxon>Enterobacterales</taxon>
        <taxon>Erwiniaceae</taxon>
        <taxon>Wigglesworthia</taxon>
    </lineage>
</organism>
<name>SECA_WIGBR</name>
<accession>Q8D301</accession>
<comment type="function">
    <text evidence="1">Part of the Sec protein translocase complex. Interacts with the SecYEG preprotein conducting channel. Has a central role in coupling the hydrolysis of ATP to the transfer of proteins into and across the cell membrane, serving as an ATP-driven molecular motor driving the stepwise translocation of polypeptide chains across the membrane.</text>
</comment>
<comment type="catalytic activity">
    <reaction evidence="2">
        <text>ATP + H2O + cellular proteinSide 1 = ADP + phosphate + cellular proteinSide 2.</text>
        <dbReference type="EC" id="7.4.2.8"/>
    </reaction>
</comment>
<comment type="subunit">
    <text evidence="2">Monomer and homodimer. Part of the essential Sec protein translocation apparatus which comprises SecA, SecYEG and auxiliary proteins SecDF-YajC and YidC.</text>
</comment>
<comment type="subcellular location">
    <subcellularLocation>
        <location evidence="2">Cell membrane</location>
        <topology evidence="2">Peripheral membrane protein</topology>
        <orientation evidence="2">Cytoplasmic side</orientation>
    </subcellularLocation>
    <subcellularLocation>
        <location evidence="2">Cytoplasm</location>
    </subcellularLocation>
    <text evidence="2">Distribution is 50-50.</text>
</comment>
<comment type="similarity">
    <text evidence="2 3">Belongs to the SecA family.</text>
</comment>